<protein>
    <recommendedName>
        <fullName evidence="1">DNA-directed RNA polymerase subunit omega</fullName>
        <shortName evidence="1">RNAP omega subunit</shortName>
        <ecNumber evidence="1">2.7.7.6</ecNumber>
    </recommendedName>
    <alternativeName>
        <fullName evidence="1">RNA polymerase omega subunit</fullName>
    </alternativeName>
    <alternativeName>
        <fullName evidence="1">Transcriptase subunit omega</fullName>
    </alternativeName>
</protein>
<sequence length="87" mass="9533">MARVTVEDCLEKLDNRFELVLVAGKRAHQLQSGGKEPRVAWENDKPTVVALREIAEGLVTAESVDNPIADRSADVDELALLTQSFGE</sequence>
<gene>
    <name evidence="1" type="primary">rpoZ</name>
    <name type="ordered locus">ABO_0177</name>
</gene>
<dbReference type="EC" id="2.7.7.6" evidence="1"/>
<dbReference type="EMBL" id="AM286690">
    <property type="protein sequence ID" value="CAL15625.1"/>
    <property type="molecule type" value="Genomic_DNA"/>
</dbReference>
<dbReference type="RefSeq" id="WP_011587474.1">
    <property type="nucleotide sequence ID" value="NC_008260.1"/>
</dbReference>
<dbReference type="SMR" id="Q0VT95"/>
<dbReference type="STRING" id="393595.ABO_0177"/>
<dbReference type="KEGG" id="abo:ABO_0177"/>
<dbReference type="eggNOG" id="COG1758">
    <property type="taxonomic scope" value="Bacteria"/>
</dbReference>
<dbReference type="HOGENOM" id="CLU_125406_5_2_6"/>
<dbReference type="OrthoDB" id="9796300at2"/>
<dbReference type="Proteomes" id="UP000008871">
    <property type="component" value="Chromosome"/>
</dbReference>
<dbReference type="GO" id="GO:0000428">
    <property type="term" value="C:DNA-directed RNA polymerase complex"/>
    <property type="evidence" value="ECO:0007669"/>
    <property type="project" value="UniProtKB-KW"/>
</dbReference>
<dbReference type="GO" id="GO:0003677">
    <property type="term" value="F:DNA binding"/>
    <property type="evidence" value="ECO:0007669"/>
    <property type="project" value="UniProtKB-UniRule"/>
</dbReference>
<dbReference type="GO" id="GO:0003899">
    <property type="term" value="F:DNA-directed RNA polymerase activity"/>
    <property type="evidence" value="ECO:0007669"/>
    <property type="project" value="UniProtKB-UniRule"/>
</dbReference>
<dbReference type="GO" id="GO:0006351">
    <property type="term" value="P:DNA-templated transcription"/>
    <property type="evidence" value="ECO:0007669"/>
    <property type="project" value="UniProtKB-UniRule"/>
</dbReference>
<dbReference type="Gene3D" id="3.90.940.10">
    <property type="match status" value="1"/>
</dbReference>
<dbReference type="HAMAP" id="MF_00366">
    <property type="entry name" value="RNApol_bact_RpoZ"/>
    <property type="match status" value="1"/>
</dbReference>
<dbReference type="InterPro" id="IPR003716">
    <property type="entry name" value="DNA-dir_RNA_pol_omega"/>
</dbReference>
<dbReference type="InterPro" id="IPR006110">
    <property type="entry name" value="Pol_omega/Rpo6/RPB6"/>
</dbReference>
<dbReference type="InterPro" id="IPR036161">
    <property type="entry name" value="RPB6/omega-like_sf"/>
</dbReference>
<dbReference type="NCBIfam" id="TIGR00690">
    <property type="entry name" value="rpoZ"/>
    <property type="match status" value="1"/>
</dbReference>
<dbReference type="PANTHER" id="PTHR34476">
    <property type="entry name" value="DNA-DIRECTED RNA POLYMERASE SUBUNIT OMEGA"/>
    <property type="match status" value="1"/>
</dbReference>
<dbReference type="PANTHER" id="PTHR34476:SF1">
    <property type="entry name" value="DNA-DIRECTED RNA POLYMERASE SUBUNIT OMEGA"/>
    <property type="match status" value="1"/>
</dbReference>
<dbReference type="Pfam" id="PF01192">
    <property type="entry name" value="RNA_pol_Rpb6"/>
    <property type="match status" value="1"/>
</dbReference>
<dbReference type="SMART" id="SM01409">
    <property type="entry name" value="RNA_pol_Rpb6"/>
    <property type="match status" value="1"/>
</dbReference>
<dbReference type="SUPFAM" id="SSF63562">
    <property type="entry name" value="RPB6/omega subunit-like"/>
    <property type="match status" value="1"/>
</dbReference>
<reference key="1">
    <citation type="journal article" date="2006" name="Nat. Biotechnol.">
        <title>Genome sequence of the ubiquitous hydrocarbon-degrading marine bacterium Alcanivorax borkumensis.</title>
        <authorList>
            <person name="Schneiker S."/>
            <person name="Martins dos Santos V.A.P."/>
            <person name="Bartels D."/>
            <person name="Bekel T."/>
            <person name="Brecht M."/>
            <person name="Buhrmester J."/>
            <person name="Chernikova T.N."/>
            <person name="Denaro R."/>
            <person name="Ferrer M."/>
            <person name="Gertler C."/>
            <person name="Goesmann A."/>
            <person name="Golyshina O.V."/>
            <person name="Kaminski F."/>
            <person name="Khachane A.N."/>
            <person name="Lang S."/>
            <person name="Linke B."/>
            <person name="McHardy A.C."/>
            <person name="Meyer F."/>
            <person name="Nechitaylo T."/>
            <person name="Puehler A."/>
            <person name="Regenhardt D."/>
            <person name="Rupp O."/>
            <person name="Sabirova J.S."/>
            <person name="Selbitschka W."/>
            <person name="Yakimov M.M."/>
            <person name="Timmis K.N."/>
            <person name="Vorhoelter F.-J."/>
            <person name="Weidner S."/>
            <person name="Kaiser O."/>
            <person name="Golyshin P.N."/>
        </authorList>
    </citation>
    <scope>NUCLEOTIDE SEQUENCE [LARGE SCALE GENOMIC DNA]</scope>
    <source>
        <strain>ATCC 700651 / DSM 11573 / NCIMB 13689 / SK2</strain>
    </source>
</reference>
<evidence type="ECO:0000255" key="1">
    <source>
        <dbReference type="HAMAP-Rule" id="MF_00366"/>
    </source>
</evidence>
<proteinExistence type="inferred from homology"/>
<feature type="chain" id="PRO_1000005883" description="DNA-directed RNA polymerase subunit omega">
    <location>
        <begin position="1"/>
        <end position="87"/>
    </location>
</feature>
<name>RPOZ_ALCBS</name>
<accession>Q0VT95</accession>
<comment type="function">
    <text evidence="1">Promotes RNA polymerase assembly. Latches the N- and C-terminal regions of the beta' subunit thereby facilitating its interaction with the beta and alpha subunits.</text>
</comment>
<comment type="catalytic activity">
    <reaction evidence="1">
        <text>RNA(n) + a ribonucleoside 5'-triphosphate = RNA(n+1) + diphosphate</text>
        <dbReference type="Rhea" id="RHEA:21248"/>
        <dbReference type="Rhea" id="RHEA-COMP:14527"/>
        <dbReference type="Rhea" id="RHEA-COMP:17342"/>
        <dbReference type="ChEBI" id="CHEBI:33019"/>
        <dbReference type="ChEBI" id="CHEBI:61557"/>
        <dbReference type="ChEBI" id="CHEBI:140395"/>
        <dbReference type="EC" id="2.7.7.6"/>
    </reaction>
</comment>
<comment type="subunit">
    <text evidence="1">The RNAP catalytic core consists of 2 alpha, 1 beta, 1 beta' and 1 omega subunit. When a sigma factor is associated with the core the holoenzyme is formed, which can initiate transcription.</text>
</comment>
<comment type="similarity">
    <text evidence="1">Belongs to the RNA polymerase subunit omega family.</text>
</comment>
<organism>
    <name type="scientific">Alcanivorax borkumensis (strain ATCC 700651 / DSM 11573 / NCIMB 13689 / SK2)</name>
    <dbReference type="NCBI Taxonomy" id="393595"/>
    <lineage>
        <taxon>Bacteria</taxon>
        <taxon>Pseudomonadati</taxon>
        <taxon>Pseudomonadota</taxon>
        <taxon>Gammaproteobacteria</taxon>
        <taxon>Oceanospirillales</taxon>
        <taxon>Alcanivoracaceae</taxon>
        <taxon>Alcanivorax</taxon>
    </lineage>
</organism>
<keyword id="KW-0240">DNA-directed RNA polymerase</keyword>
<keyword id="KW-0548">Nucleotidyltransferase</keyword>
<keyword id="KW-1185">Reference proteome</keyword>
<keyword id="KW-0804">Transcription</keyword>
<keyword id="KW-0808">Transferase</keyword>